<reference key="1">
    <citation type="journal article" date="2002" name="Nature">
        <title>Comparison of the genomes of two Xanthomonas pathogens with differing host specificities.</title>
        <authorList>
            <person name="da Silva A.C.R."/>
            <person name="Ferro J.A."/>
            <person name="Reinach F.C."/>
            <person name="Farah C.S."/>
            <person name="Furlan L.R."/>
            <person name="Quaggio R.B."/>
            <person name="Monteiro-Vitorello C.B."/>
            <person name="Van Sluys M.A."/>
            <person name="Almeida N.F. Jr."/>
            <person name="Alves L.M.C."/>
            <person name="do Amaral A.M."/>
            <person name="Bertolini M.C."/>
            <person name="Camargo L.E.A."/>
            <person name="Camarotte G."/>
            <person name="Cannavan F."/>
            <person name="Cardozo J."/>
            <person name="Chambergo F."/>
            <person name="Ciapina L.P."/>
            <person name="Cicarelli R.M.B."/>
            <person name="Coutinho L.L."/>
            <person name="Cursino-Santos J.R."/>
            <person name="El-Dorry H."/>
            <person name="Faria J.B."/>
            <person name="Ferreira A.J.S."/>
            <person name="Ferreira R.C.C."/>
            <person name="Ferro M.I.T."/>
            <person name="Formighieri E.F."/>
            <person name="Franco M.C."/>
            <person name="Greggio C.C."/>
            <person name="Gruber A."/>
            <person name="Katsuyama A.M."/>
            <person name="Kishi L.T."/>
            <person name="Leite R.P."/>
            <person name="Lemos E.G.M."/>
            <person name="Lemos M.V.F."/>
            <person name="Locali E.C."/>
            <person name="Machado M.A."/>
            <person name="Madeira A.M.B.N."/>
            <person name="Martinez-Rossi N.M."/>
            <person name="Martins E.C."/>
            <person name="Meidanis J."/>
            <person name="Menck C.F.M."/>
            <person name="Miyaki C.Y."/>
            <person name="Moon D.H."/>
            <person name="Moreira L.M."/>
            <person name="Novo M.T.M."/>
            <person name="Okura V.K."/>
            <person name="Oliveira M.C."/>
            <person name="Oliveira V.R."/>
            <person name="Pereira H.A."/>
            <person name="Rossi A."/>
            <person name="Sena J.A.D."/>
            <person name="Silva C."/>
            <person name="de Souza R.F."/>
            <person name="Spinola L.A.F."/>
            <person name="Takita M.A."/>
            <person name="Tamura R.E."/>
            <person name="Teixeira E.C."/>
            <person name="Tezza R.I.D."/>
            <person name="Trindade dos Santos M."/>
            <person name="Truffi D."/>
            <person name="Tsai S.M."/>
            <person name="White F.F."/>
            <person name="Setubal J.C."/>
            <person name="Kitajima J.P."/>
        </authorList>
    </citation>
    <scope>NUCLEOTIDE SEQUENCE [LARGE SCALE GENOMIC DNA]</scope>
    <source>
        <strain>306</strain>
    </source>
</reference>
<name>RL32_XANAC</name>
<organism>
    <name type="scientific">Xanthomonas axonopodis pv. citri (strain 306)</name>
    <dbReference type="NCBI Taxonomy" id="190486"/>
    <lineage>
        <taxon>Bacteria</taxon>
        <taxon>Pseudomonadati</taxon>
        <taxon>Pseudomonadota</taxon>
        <taxon>Gammaproteobacteria</taxon>
        <taxon>Lysobacterales</taxon>
        <taxon>Lysobacteraceae</taxon>
        <taxon>Xanthomonas</taxon>
    </lineage>
</organism>
<comment type="similarity">
    <text evidence="1">Belongs to the bacterial ribosomal protein bL32 family.</text>
</comment>
<evidence type="ECO:0000255" key="1">
    <source>
        <dbReference type="HAMAP-Rule" id="MF_00340"/>
    </source>
</evidence>
<evidence type="ECO:0000256" key="2">
    <source>
        <dbReference type="SAM" id="MobiDB-lite"/>
    </source>
</evidence>
<evidence type="ECO:0000305" key="3"/>
<accession>Q8PNE9</accession>
<gene>
    <name evidence="1" type="primary">rpmF</name>
    <name type="ordered locus">XAC1122</name>
</gene>
<proteinExistence type="inferred from homology"/>
<feature type="chain" id="PRO_0000172440" description="Large ribosomal subunit protein bL32">
    <location>
        <begin position="1"/>
        <end position="64"/>
    </location>
</feature>
<feature type="region of interest" description="Disordered" evidence="2">
    <location>
        <begin position="1"/>
        <end position="35"/>
    </location>
</feature>
<keyword id="KW-0687">Ribonucleoprotein</keyword>
<keyword id="KW-0689">Ribosomal protein</keyword>
<dbReference type="EMBL" id="AE008923">
    <property type="protein sequence ID" value="AAM35995.1"/>
    <property type="molecule type" value="Genomic_DNA"/>
</dbReference>
<dbReference type="RefSeq" id="WP_003483870.1">
    <property type="nucleotide sequence ID" value="NC_003919.1"/>
</dbReference>
<dbReference type="SMR" id="Q8PNE9"/>
<dbReference type="GeneID" id="97509455"/>
<dbReference type="KEGG" id="xac:XAC1122"/>
<dbReference type="eggNOG" id="COG0333">
    <property type="taxonomic scope" value="Bacteria"/>
</dbReference>
<dbReference type="HOGENOM" id="CLU_129084_2_1_6"/>
<dbReference type="Proteomes" id="UP000000576">
    <property type="component" value="Chromosome"/>
</dbReference>
<dbReference type="GO" id="GO:0015934">
    <property type="term" value="C:large ribosomal subunit"/>
    <property type="evidence" value="ECO:0007669"/>
    <property type="project" value="InterPro"/>
</dbReference>
<dbReference type="GO" id="GO:0003735">
    <property type="term" value="F:structural constituent of ribosome"/>
    <property type="evidence" value="ECO:0007669"/>
    <property type="project" value="InterPro"/>
</dbReference>
<dbReference type="GO" id="GO:0006412">
    <property type="term" value="P:translation"/>
    <property type="evidence" value="ECO:0007669"/>
    <property type="project" value="UniProtKB-UniRule"/>
</dbReference>
<dbReference type="HAMAP" id="MF_00340">
    <property type="entry name" value="Ribosomal_bL32"/>
    <property type="match status" value="1"/>
</dbReference>
<dbReference type="InterPro" id="IPR002677">
    <property type="entry name" value="Ribosomal_bL32"/>
</dbReference>
<dbReference type="InterPro" id="IPR044957">
    <property type="entry name" value="Ribosomal_bL32_bact"/>
</dbReference>
<dbReference type="InterPro" id="IPR011332">
    <property type="entry name" value="Ribosomal_zn-bd"/>
</dbReference>
<dbReference type="NCBIfam" id="TIGR01031">
    <property type="entry name" value="rpmF_bact"/>
    <property type="match status" value="1"/>
</dbReference>
<dbReference type="PANTHER" id="PTHR35534">
    <property type="entry name" value="50S RIBOSOMAL PROTEIN L32"/>
    <property type="match status" value="1"/>
</dbReference>
<dbReference type="PANTHER" id="PTHR35534:SF1">
    <property type="entry name" value="LARGE RIBOSOMAL SUBUNIT PROTEIN BL32"/>
    <property type="match status" value="1"/>
</dbReference>
<dbReference type="Pfam" id="PF01783">
    <property type="entry name" value="Ribosomal_L32p"/>
    <property type="match status" value="1"/>
</dbReference>
<dbReference type="SUPFAM" id="SSF57829">
    <property type="entry name" value="Zn-binding ribosomal proteins"/>
    <property type="match status" value="1"/>
</dbReference>
<sequence length="64" mass="7130">MAVQKSRVTPSRRGQRRSHDALTAKQLSTDPTSGEIHLRHHITADGYYRGKKVIATKSSAVQED</sequence>
<protein>
    <recommendedName>
        <fullName evidence="1">Large ribosomal subunit protein bL32</fullName>
    </recommendedName>
    <alternativeName>
        <fullName evidence="3">50S ribosomal protein L32</fullName>
    </alternativeName>
</protein>